<dbReference type="EMBL" id="AK057332">
    <property type="protein sequence ID" value="BAB71431.1"/>
    <property type="molecule type" value="mRNA"/>
</dbReference>
<dbReference type="EMBL" id="AC100871">
    <property type="status" value="NOT_ANNOTATED_CDS"/>
    <property type="molecule type" value="Genomic_DNA"/>
</dbReference>
<dbReference type="EMBL" id="BC101502">
    <property type="status" value="NOT_ANNOTATED_CDS"/>
    <property type="molecule type" value="mRNA"/>
</dbReference>
<dbReference type="EMBL" id="BC101506">
    <property type="status" value="NOT_ANNOTATED_CDS"/>
    <property type="molecule type" value="mRNA"/>
</dbReference>
<dbReference type="GlyGen" id="Q96M78">
    <property type="glycosylation" value="1 site, 1 O-linked glycan (1 site)"/>
</dbReference>
<dbReference type="BioMuta" id="HGNC:26534"/>
<dbReference type="AGR" id="HGNC:26534"/>
<dbReference type="GeneCards" id="FER1L6-AS2"/>
<dbReference type="HGNC" id="HGNC:26534">
    <property type="gene designation" value="FER1L6-AS2"/>
</dbReference>
<dbReference type="neXtProt" id="NX_Q96M78"/>
<dbReference type="InParanoid" id="Q96M78"/>
<dbReference type="PAN-GO" id="Q96M78">
    <property type="GO annotations" value="0 GO annotations based on evolutionary models"/>
</dbReference>
<dbReference type="ChiTaRS" id="FER1L6-AS2">
    <property type="organism name" value="human"/>
</dbReference>
<dbReference type="Pharos" id="Q96M78">
    <property type="development level" value="Tdark"/>
</dbReference>
<dbReference type="PRO" id="PR:Q96M78"/>
<dbReference type="Proteomes" id="UP000005640">
    <property type="component" value="Unplaced"/>
</dbReference>
<dbReference type="RNAct" id="Q96M78">
    <property type="molecule type" value="protein"/>
</dbReference>
<protein>
    <recommendedName>
        <fullName>Putative uncharacterized protein encoded by FER1L6-AS2</fullName>
    </recommendedName>
    <alternativeName>
        <fullName>FER1L6 antisense RNA 2</fullName>
    </alternativeName>
    <alternativeName>
        <fullName>FER1L6 antisense gene protein 2</fullName>
    </alternativeName>
</protein>
<reference key="1">
    <citation type="journal article" date="2004" name="Nat. Genet.">
        <title>Complete sequencing and characterization of 21,243 full-length human cDNAs.</title>
        <authorList>
            <person name="Ota T."/>
            <person name="Suzuki Y."/>
            <person name="Nishikawa T."/>
            <person name="Otsuki T."/>
            <person name="Sugiyama T."/>
            <person name="Irie R."/>
            <person name="Wakamatsu A."/>
            <person name="Hayashi K."/>
            <person name="Sato H."/>
            <person name="Nagai K."/>
            <person name="Kimura K."/>
            <person name="Makita H."/>
            <person name="Sekine M."/>
            <person name="Obayashi M."/>
            <person name="Nishi T."/>
            <person name="Shibahara T."/>
            <person name="Tanaka T."/>
            <person name="Ishii S."/>
            <person name="Yamamoto J."/>
            <person name="Saito K."/>
            <person name="Kawai Y."/>
            <person name="Isono Y."/>
            <person name="Nakamura Y."/>
            <person name="Nagahari K."/>
            <person name="Murakami K."/>
            <person name="Yasuda T."/>
            <person name="Iwayanagi T."/>
            <person name="Wagatsuma M."/>
            <person name="Shiratori A."/>
            <person name="Sudo H."/>
            <person name="Hosoiri T."/>
            <person name="Kaku Y."/>
            <person name="Kodaira H."/>
            <person name="Kondo H."/>
            <person name="Sugawara M."/>
            <person name="Takahashi M."/>
            <person name="Kanda K."/>
            <person name="Yokoi T."/>
            <person name="Furuya T."/>
            <person name="Kikkawa E."/>
            <person name="Omura Y."/>
            <person name="Abe K."/>
            <person name="Kamihara K."/>
            <person name="Katsuta N."/>
            <person name="Sato K."/>
            <person name="Tanikawa M."/>
            <person name="Yamazaki M."/>
            <person name="Ninomiya K."/>
            <person name="Ishibashi T."/>
            <person name="Yamashita H."/>
            <person name="Murakawa K."/>
            <person name="Fujimori K."/>
            <person name="Tanai H."/>
            <person name="Kimata M."/>
            <person name="Watanabe M."/>
            <person name="Hiraoka S."/>
            <person name="Chiba Y."/>
            <person name="Ishida S."/>
            <person name="Ono Y."/>
            <person name="Takiguchi S."/>
            <person name="Watanabe S."/>
            <person name="Yosida M."/>
            <person name="Hotuta T."/>
            <person name="Kusano J."/>
            <person name="Kanehori K."/>
            <person name="Takahashi-Fujii A."/>
            <person name="Hara H."/>
            <person name="Tanase T.-O."/>
            <person name="Nomura Y."/>
            <person name="Togiya S."/>
            <person name="Komai F."/>
            <person name="Hara R."/>
            <person name="Takeuchi K."/>
            <person name="Arita M."/>
            <person name="Imose N."/>
            <person name="Musashino K."/>
            <person name="Yuuki H."/>
            <person name="Oshima A."/>
            <person name="Sasaki N."/>
            <person name="Aotsuka S."/>
            <person name="Yoshikawa Y."/>
            <person name="Matsunawa H."/>
            <person name="Ichihara T."/>
            <person name="Shiohata N."/>
            <person name="Sano S."/>
            <person name="Moriya S."/>
            <person name="Momiyama H."/>
            <person name="Satoh N."/>
            <person name="Takami S."/>
            <person name="Terashima Y."/>
            <person name="Suzuki O."/>
            <person name="Nakagawa S."/>
            <person name="Senoh A."/>
            <person name="Mizoguchi H."/>
            <person name="Goto Y."/>
            <person name="Shimizu F."/>
            <person name="Wakebe H."/>
            <person name="Hishigaki H."/>
            <person name="Watanabe T."/>
            <person name="Sugiyama A."/>
            <person name="Takemoto M."/>
            <person name="Kawakami B."/>
            <person name="Yamazaki M."/>
            <person name="Watanabe K."/>
            <person name="Kumagai A."/>
            <person name="Itakura S."/>
            <person name="Fukuzumi Y."/>
            <person name="Fujimori Y."/>
            <person name="Komiyama M."/>
            <person name="Tashiro H."/>
            <person name="Tanigami A."/>
            <person name="Fujiwara T."/>
            <person name="Ono T."/>
            <person name="Yamada K."/>
            <person name="Fujii Y."/>
            <person name="Ozaki K."/>
            <person name="Hirao M."/>
            <person name="Ohmori Y."/>
            <person name="Kawabata A."/>
            <person name="Hikiji T."/>
            <person name="Kobatake N."/>
            <person name="Inagaki H."/>
            <person name="Ikema Y."/>
            <person name="Okamoto S."/>
            <person name="Okitani R."/>
            <person name="Kawakami T."/>
            <person name="Noguchi S."/>
            <person name="Itoh T."/>
            <person name="Shigeta K."/>
            <person name="Senba T."/>
            <person name="Matsumura K."/>
            <person name="Nakajima Y."/>
            <person name="Mizuno T."/>
            <person name="Morinaga M."/>
            <person name="Sasaki M."/>
            <person name="Togashi T."/>
            <person name="Oyama M."/>
            <person name="Hata H."/>
            <person name="Watanabe M."/>
            <person name="Komatsu T."/>
            <person name="Mizushima-Sugano J."/>
            <person name="Satoh T."/>
            <person name="Shirai Y."/>
            <person name="Takahashi Y."/>
            <person name="Nakagawa K."/>
            <person name="Okumura K."/>
            <person name="Nagase T."/>
            <person name="Nomura N."/>
            <person name="Kikuchi H."/>
            <person name="Masuho Y."/>
            <person name="Yamashita R."/>
            <person name="Nakai K."/>
            <person name="Yada T."/>
            <person name="Nakamura Y."/>
            <person name="Ohara O."/>
            <person name="Isogai T."/>
            <person name="Sugano S."/>
        </authorList>
    </citation>
    <scope>NUCLEOTIDE SEQUENCE [LARGE SCALE MRNA]</scope>
    <scope>VARIANT SER-92</scope>
    <source>
        <tissue>Testis</tissue>
    </source>
</reference>
<reference key="2">
    <citation type="journal article" date="2006" name="Nature">
        <title>DNA sequence and analysis of human chromosome 8.</title>
        <authorList>
            <person name="Nusbaum C."/>
            <person name="Mikkelsen T.S."/>
            <person name="Zody M.C."/>
            <person name="Asakawa S."/>
            <person name="Taudien S."/>
            <person name="Garber M."/>
            <person name="Kodira C.D."/>
            <person name="Schueler M.G."/>
            <person name="Shimizu A."/>
            <person name="Whittaker C.A."/>
            <person name="Chang J.L."/>
            <person name="Cuomo C.A."/>
            <person name="Dewar K."/>
            <person name="FitzGerald M.G."/>
            <person name="Yang X."/>
            <person name="Allen N.R."/>
            <person name="Anderson S."/>
            <person name="Asakawa T."/>
            <person name="Blechschmidt K."/>
            <person name="Bloom T."/>
            <person name="Borowsky M.L."/>
            <person name="Butler J."/>
            <person name="Cook A."/>
            <person name="Corum B."/>
            <person name="DeArellano K."/>
            <person name="DeCaprio D."/>
            <person name="Dooley K.T."/>
            <person name="Dorris L. III"/>
            <person name="Engels R."/>
            <person name="Gloeckner G."/>
            <person name="Hafez N."/>
            <person name="Hagopian D.S."/>
            <person name="Hall J.L."/>
            <person name="Ishikawa S.K."/>
            <person name="Jaffe D.B."/>
            <person name="Kamat A."/>
            <person name="Kudoh J."/>
            <person name="Lehmann R."/>
            <person name="Lokitsang T."/>
            <person name="Macdonald P."/>
            <person name="Major J.E."/>
            <person name="Matthews C.D."/>
            <person name="Mauceli E."/>
            <person name="Menzel U."/>
            <person name="Mihalev A.H."/>
            <person name="Minoshima S."/>
            <person name="Murayama Y."/>
            <person name="Naylor J.W."/>
            <person name="Nicol R."/>
            <person name="Nguyen C."/>
            <person name="O'Leary S.B."/>
            <person name="O'Neill K."/>
            <person name="Parker S.C.J."/>
            <person name="Polley A."/>
            <person name="Raymond C.K."/>
            <person name="Reichwald K."/>
            <person name="Rodriguez J."/>
            <person name="Sasaki T."/>
            <person name="Schilhabel M."/>
            <person name="Siddiqui R."/>
            <person name="Smith C.L."/>
            <person name="Sneddon T.P."/>
            <person name="Talamas J.A."/>
            <person name="Tenzin P."/>
            <person name="Topham K."/>
            <person name="Venkataraman V."/>
            <person name="Wen G."/>
            <person name="Yamazaki S."/>
            <person name="Young S.K."/>
            <person name="Zeng Q."/>
            <person name="Zimmer A.R."/>
            <person name="Rosenthal A."/>
            <person name="Birren B.W."/>
            <person name="Platzer M."/>
            <person name="Shimizu N."/>
            <person name="Lander E.S."/>
        </authorList>
    </citation>
    <scope>NUCLEOTIDE SEQUENCE [LARGE SCALE GENOMIC DNA]</scope>
</reference>
<reference key="3">
    <citation type="journal article" date="2004" name="Genome Res.">
        <title>The status, quality, and expansion of the NIH full-length cDNA project: the Mammalian Gene Collection (MGC).</title>
        <authorList>
            <consortium name="The MGC Project Team"/>
        </authorList>
    </citation>
    <scope>NUCLEOTIDE SEQUENCE [LARGE SCALE MRNA]</scope>
    <scope>VARIANT SER-92</scope>
    <source>
        <tissue>Lung</tissue>
        <tissue>Placenta</tissue>
    </source>
</reference>
<sequence>MSQVGRVRSSHHFESVCLDAEVRVVLVALDHAGLHTLSSALNESLRPIHREELHLLHFPNSPEENLRKRPAEPSPQIHGGAPHLPWLCVEKLDLLPENHAVFLQERTAQLFEGSFFFSRSPAHSISPLLQFRWGHCP</sequence>
<keyword id="KW-1185">Reference proteome</keyword>
<organism>
    <name type="scientific">Homo sapiens</name>
    <name type="common">Human</name>
    <dbReference type="NCBI Taxonomy" id="9606"/>
    <lineage>
        <taxon>Eukaryota</taxon>
        <taxon>Metazoa</taxon>
        <taxon>Chordata</taxon>
        <taxon>Craniata</taxon>
        <taxon>Vertebrata</taxon>
        <taxon>Euteleostomi</taxon>
        <taxon>Mammalia</taxon>
        <taxon>Eutheria</taxon>
        <taxon>Euarchontoglires</taxon>
        <taxon>Primates</taxon>
        <taxon>Haplorrhini</taxon>
        <taxon>Catarrhini</taxon>
        <taxon>Hominidae</taxon>
        <taxon>Homo</taxon>
    </lineage>
</organism>
<evidence type="ECO:0000269" key="1">
    <source>
    </source>
</evidence>
<evidence type="ECO:0000269" key="2">
    <source>
    </source>
</evidence>
<gene>
    <name type="primary">FER1L6-AS2</name>
    <name type="synonym">C8orf78</name>
</gene>
<proteinExistence type="evidence at transcript level"/>
<feature type="chain" id="PRO_0000270933" description="Putative uncharacterized protein encoded by FER1L6-AS2">
    <location>
        <begin position="1"/>
        <end position="137"/>
    </location>
</feature>
<feature type="sequence variant" id="VAR_029819" description="In dbSNP:rs13258808." evidence="1 2">
    <original>L</original>
    <variation>S</variation>
    <location>
        <position position="92"/>
    </location>
</feature>
<name>FEAS2_HUMAN</name>
<accession>Q96M78</accession>